<proteinExistence type="inferred from homology"/>
<accession>Q5F5X3</accession>
<keyword id="KW-0963">Cytoplasm</keyword>
<keyword id="KW-0648">Protein biosynthesis</keyword>
<keyword id="KW-1185">Reference proteome</keyword>
<sequence length="185" mass="20643">MINDIQKTAEGKMQRSVEVLKENLAKVRTGRAHTGLLDQVEVEYWGSMVPVSQVANVTLLDARTIGVKPFEGNMAAKVEKAIRDSNLGLNPAAVGDLIRVPMPMLTEERRKDLIKVVRGEAEEGRVSIRNVRRDANDHIKKLLKDKEISEDEARRGEEAVQKLTDKYIAEADKVLAAKEEDLMAV</sequence>
<dbReference type="EMBL" id="AE004969">
    <property type="protein sequence ID" value="AAW90414.1"/>
    <property type="molecule type" value="Genomic_DNA"/>
</dbReference>
<dbReference type="RefSeq" id="WP_003690026.1">
    <property type="nucleotide sequence ID" value="NC_002946.2"/>
</dbReference>
<dbReference type="RefSeq" id="YP_208826.1">
    <property type="nucleotide sequence ID" value="NC_002946.2"/>
</dbReference>
<dbReference type="SMR" id="Q5F5X3"/>
<dbReference type="STRING" id="242231.NGO_1796"/>
<dbReference type="GeneID" id="66754345"/>
<dbReference type="KEGG" id="ngo:NGO_1796"/>
<dbReference type="PATRIC" id="fig|242231.10.peg.2156"/>
<dbReference type="HOGENOM" id="CLU_073981_2_0_4"/>
<dbReference type="Proteomes" id="UP000000535">
    <property type="component" value="Chromosome"/>
</dbReference>
<dbReference type="GO" id="GO:0005829">
    <property type="term" value="C:cytosol"/>
    <property type="evidence" value="ECO:0007669"/>
    <property type="project" value="GOC"/>
</dbReference>
<dbReference type="GO" id="GO:0043023">
    <property type="term" value="F:ribosomal large subunit binding"/>
    <property type="evidence" value="ECO:0007669"/>
    <property type="project" value="TreeGrafter"/>
</dbReference>
<dbReference type="GO" id="GO:0002184">
    <property type="term" value="P:cytoplasmic translational termination"/>
    <property type="evidence" value="ECO:0007669"/>
    <property type="project" value="TreeGrafter"/>
</dbReference>
<dbReference type="CDD" id="cd00520">
    <property type="entry name" value="RRF"/>
    <property type="match status" value="1"/>
</dbReference>
<dbReference type="FunFam" id="1.10.132.20:FF:000001">
    <property type="entry name" value="Ribosome-recycling factor"/>
    <property type="match status" value="1"/>
</dbReference>
<dbReference type="FunFam" id="3.30.1360.40:FF:000001">
    <property type="entry name" value="Ribosome-recycling factor"/>
    <property type="match status" value="1"/>
</dbReference>
<dbReference type="Gene3D" id="3.30.1360.40">
    <property type="match status" value="1"/>
</dbReference>
<dbReference type="Gene3D" id="1.10.132.20">
    <property type="entry name" value="Ribosome-recycling factor"/>
    <property type="match status" value="1"/>
</dbReference>
<dbReference type="HAMAP" id="MF_00040">
    <property type="entry name" value="RRF"/>
    <property type="match status" value="1"/>
</dbReference>
<dbReference type="InterPro" id="IPR002661">
    <property type="entry name" value="Ribosome_recyc_fac"/>
</dbReference>
<dbReference type="InterPro" id="IPR023584">
    <property type="entry name" value="Ribosome_recyc_fac_dom"/>
</dbReference>
<dbReference type="InterPro" id="IPR036191">
    <property type="entry name" value="RRF_sf"/>
</dbReference>
<dbReference type="NCBIfam" id="TIGR00496">
    <property type="entry name" value="frr"/>
    <property type="match status" value="1"/>
</dbReference>
<dbReference type="PANTHER" id="PTHR20982:SF3">
    <property type="entry name" value="MITOCHONDRIAL RIBOSOME RECYCLING FACTOR PSEUDO 1"/>
    <property type="match status" value="1"/>
</dbReference>
<dbReference type="PANTHER" id="PTHR20982">
    <property type="entry name" value="RIBOSOME RECYCLING FACTOR"/>
    <property type="match status" value="1"/>
</dbReference>
<dbReference type="Pfam" id="PF01765">
    <property type="entry name" value="RRF"/>
    <property type="match status" value="1"/>
</dbReference>
<dbReference type="SUPFAM" id="SSF55194">
    <property type="entry name" value="Ribosome recycling factor, RRF"/>
    <property type="match status" value="1"/>
</dbReference>
<organism>
    <name type="scientific">Neisseria gonorrhoeae (strain ATCC 700825 / FA 1090)</name>
    <dbReference type="NCBI Taxonomy" id="242231"/>
    <lineage>
        <taxon>Bacteria</taxon>
        <taxon>Pseudomonadati</taxon>
        <taxon>Pseudomonadota</taxon>
        <taxon>Betaproteobacteria</taxon>
        <taxon>Neisseriales</taxon>
        <taxon>Neisseriaceae</taxon>
        <taxon>Neisseria</taxon>
    </lineage>
</organism>
<gene>
    <name evidence="1" type="primary">frr</name>
    <name type="ordered locus">NGO_1796</name>
</gene>
<protein>
    <recommendedName>
        <fullName evidence="1">Ribosome-recycling factor</fullName>
        <shortName evidence="1">RRF</shortName>
    </recommendedName>
    <alternativeName>
        <fullName evidence="1">Ribosome-releasing factor</fullName>
    </alternativeName>
</protein>
<feature type="chain" id="PRO_0000167501" description="Ribosome-recycling factor">
    <location>
        <begin position="1"/>
        <end position="185"/>
    </location>
</feature>
<reference key="1">
    <citation type="submission" date="2003-03" db="EMBL/GenBank/DDBJ databases">
        <title>The complete genome sequence of Neisseria gonorrhoeae.</title>
        <authorList>
            <person name="Lewis L.A."/>
            <person name="Gillaspy A.F."/>
            <person name="McLaughlin R.E."/>
            <person name="Gipson M."/>
            <person name="Ducey T.F."/>
            <person name="Ownbey T."/>
            <person name="Hartman K."/>
            <person name="Nydick C."/>
            <person name="Carson M.B."/>
            <person name="Vaughn J."/>
            <person name="Thomson C."/>
            <person name="Song L."/>
            <person name="Lin S."/>
            <person name="Yuan X."/>
            <person name="Najar F."/>
            <person name="Zhan M."/>
            <person name="Ren Q."/>
            <person name="Zhu H."/>
            <person name="Qi S."/>
            <person name="Kenton S.M."/>
            <person name="Lai H."/>
            <person name="White J.D."/>
            <person name="Clifton S."/>
            <person name="Roe B.A."/>
            <person name="Dyer D.W."/>
        </authorList>
    </citation>
    <scope>NUCLEOTIDE SEQUENCE [LARGE SCALE GENOMIC DNA]</scope>
    <source>
        <strain>ATCC 700825 / FA 1090</strain>
    </source>
</reference>
<evidence type="ECO:0000255" key="1">
    <source>
        <dbReference type="HAMAP-Rule" id="MF_00040"/>
    </source>
</evidence>
<name>RRF_NEIG1</name>
<comment type="function">
    <text evidence="1">Responsible for the release of ribosomes from messenger RNA at the termination of protein biosynthesis. May increase the efficiency of translation by recycling ribosomes from one round of translation to another.</text>
</comment>
<comment type="subcellular location">
    <subcellularLocation>
        <location evidence="1">Cytoplasm</location>
    </subcellularLocation>
</comment>
<comment type="similarity">
    <text evidence="1">Belongs to the RRF family.</text>
</comment>